<gene>
    <name evidence="1" type="primary">panB</name>
    <name type="ordered locus">NIS_0373</name>
</gene>
<proteinExistence type="inferred from homology"/>
<evidence type="ECO:0000255" key="1">
    <source>
        <dbReference type="HAMAP-Rule" id="MF_00156"/>
    </source>
</evidence>
<dbReference type="EC" id="2.1.2.11" evidence="1"/>
<dbReference type="EMBL" id="AP009178">
    <property type="protein sequence ID" value="BAF69487.1"/>
    <property type="molecule type" value="Genomic_DNA"/>
</dbReference>
<dbReference type="RefSeq" id="WP_012081750.1">
    <property type="nucleotide sequence ID" value="NC_009662.1"/>
</dbReference>
<dbReference type="SMR" id="A6Q1X8"/>
<dbReference type="FunCoup" id="A6Q1X8">
    <property type="interactions" value="389"/>
</dbReference>
<dbReference type="STRING" id="387092.NIS_0373"/>
<dbReference type="KEGG" id="nis:NIS_0373"/>
<dbReference type="eggNOG" id="COG0413">
    <property type="taxonomic scope" value="Bacteria"/>
</dbReference>
<dbReference type="HOGENOM" id="CLU_036645_1_0_7"/>
<dbReference type="InParanoid" id="A6Q1X8"/>
<dbReference type="OrthoDB" id="9781789at2"/>
<dbReference type="UniPathway" id="UPA00028">
    <property type="reaction ID" value="UER00003"/>
</dbReference>
<dbReference type="Proteomes" id="UP000001118">
    <property type="component" value="Chromosome"/>
</dbReference>
<dbReference type="GO" id="GO:0005737">
    <property type="term" value="C:cytoplasm"/>
    <property type="evidence" value="ECO:0007669"/>
    <property type="project" value="UniProtKB-SubCell"/>
</dbReference>
<dbReference type="GO" id="GO:0003864">
    <property type="term" value="F:3-methyl-2-oxobutanoate hydroxymethyltransferase activity"/>
    <property type="evidence" value="ECO:0007669"/>
    <property type="project" value="UniProtKB-UniRule"/>
</dbReference>
<dbReference type="GO" id="GO:0000287">
    <property type="term" value="F:magnesium ion binding"/>
    <property type="evidence" value="ECO:0007669"/>
    <property type="project" value="TreeGrafter"/>
</dbReference>
<dbReference type="GO" id="GO:0015940">
    <property type="term" value="P:pantothenate biosynthetic process"/>
    <property type="evidence" value="ECO:0007669"/>
    <property type="project" value="UniProtKB-UniRule"/>
</dbReference>
<dbReference type="CDD" id="cd06557">
    <property type="entry name" value="KPHMT-like"/>
    <property type="match status" value="1"/>
</dbReference>
<dbReference type="FunFam" id="3.20.20.60:FF:000003">
    <property type="entry name" value="3-methyl-2-oxobutanoate hydroxymethyltransferase"/>
    <property type="match status" value="1"/>
</dbReference>
<dbReference type="Gene3D" id="3.20.20.60">
    <property type="entry name" value="Phosphoenolpyruvate-binding domains"/>
    <property type="match status" value="1"/>
</dbReference>
<dbReference type="HAMAP" id="MF_00156">
    <property type="entry name" value="PanB"/>
    <property type="match status" value="1"/>
</dbReference>
<dbReference type="InterPro" id="IPR003700">
    <property type="entry name" value="Pantoate_hydroxy_MeTrfase"/>
</dbReference>
<dbReference type="InterPro" id="IPR015813">
    <property type="entry name" value="Pyrv/PenolPyrv_kinase-like_dom"/>
</dbReference>
<dbReference type="InterPro" id="IPR040442">
    <property type="entry name" value="Pyrv_kinase-like_dom_sf"/>
</dbReference>
<dbReference type="NCBIfam" id="TIGR00222">
    <property type="entry name" value="panB"/>
    <property type="match status" value="1"/>
</dbReference>
<dbReference type="NCBIfam" id="NF001452">
    <property type="entry name" value="PRK00311.1"/>
    <property type="match status" value="1"/>
</dbReference>
<dbReference type="PANTHER" id="PTHR20881">
    <property type="entry name" value="3-METHYL-2-OXOBUTANOATE HYDROXYMETHYLTRANSFERASE"/>
    <property type="match status" value="1"/>
</dbReference>
<dbReference type="PANTHER" id="PTHR20881:SF0">
    <property type="entry name" value="3-METHYL-2-OXOBUTANOATE HYDROXYMETHYLTRANSFERASE"/>
    <property type="match status" value="1"/>
</dbReference>
<dbReference type="Pfam" id="PF02548">
    <property type="entry name" value="Pantoate_transf"/>
    <property type="match status" value="1"/>
</dbReference>
<dbReference type="PIRSF" id="PIRSF000388">
    <property type="entry name" value="Pantoate_hydroxy_MeTrfase"/>
    <property type="match status" value="1"/>
</dbReference>
<dbReference type="SUPFAM" id="SSF51621">
    <property type="entry name" value="Phosphoenolpyruvate/pyruvate domain"/>
    <property type="match status" value="1"/>
</dbReference>
<keyword id="KW-0963">Cytoplasm</keyword>
<keyword id="KW-0460">Magnesium</keyword>
<keyword id="KW-0479">Metal-binding</keyword>
<keyword id="KW-0566">Pantothenate biosynthesis</keyword>
<keyword id="KW-1185">Reference proteome</keyword>
<keyword id="KW-0808">Transferase</keyword>
<comment type="function">
    <text evidence="1">Catalyzes the reversible reaction in which hydroxymethyl group from 5,10-methylenetetrahydrofolate is transferred onto alpha-ketoisovalerate to form ketopantoate.</text>
</comment>
<comment type="catalytic activity">
    <reaction evidence="1">
        <text>3-methyl-2-oxobutanoate + (6R)-5,10-methylene-5,6,7,8-tetrahydrofolate + H2O = 2-dehydropantoate + (6S)-5,6,7,8-tetrahydrofolate</text>
        <dbReference type="Rhea" id="RHEA:11824"/>
        <dbReference type="ChEBI" id="CHEBI:11561"/>
        <dbReference type="ChEBI" id="CHEBI:11851"/>
        <dbReference type="ChEBI" id="CHEBI:15377"/>
        <dbReference type="ChEBI" id="CHEBI:15636"/>
        <dbReference type="ChEBI" id="CHEBI:57453"/>
        <dbReference type="EC" id="2.1.2.11"/>
    </reaction>
</comment>
<comment type="cofactor">
    <cofactor evidence="1">
        <name>Mg(2+)</name>
        <dbReference type="ChEBI" id="CHEBI:18420"/>
    </cofactor>
    <text evidence="1">Binds 1 Mg(2+) ion per subunit.</text>
</comment>
<comment type="pathway">
    <text evidence="1">Cofactor biosynthesis; (R)-pantothenate biosynthesis; (R)-pantoate from 3-methyl-2-oxobutanoate: step 1/2.</text>
</comment>
<comment type="subunit">
    <text evidence="1">Homodecamer; pentamer of dimers.</text>
</comment>
<comment type="subcellular location">
    <subcellularLocation>
        <location evidence="1">Cytoplasm</location>
    </subcellularLocation>
</comment>
<comment type="similarity">
    <text evidence="1">Belongs to the PanB family.</text>
</comment>
<protein>
    <recommendedName>
        <fullName evidence="1">3-methyl-2-oxobutanoate hydroxymethyltransferase</fullName>
        <ecNumber evidence="1">2.1.2.11</ecNumber>
    </recommendedName>
    <alternativeName>
        <fullName evidence="1">Ketopantoate hydroxymethyltransferase</fullName>
        <shortName evidence="1">KPHMT</shortName>
    </alternativeName>
</protein>
<sequence length="259" mass="28316">MKKRHTVNTIKSAKNSNKLVMITAYDALFAKLFEPIVDMILVGDSLNMVFAGRSDTLSATLDQMIYHANAVCSGAPSAFVVLDMPYGTYINEKEALQNAIRIYKETDVDAVKLEGGKEKADLIKTLCQNGIAVMGHIGLLPQHVRGQGGYKVVREADRLMEDAKALEEAGVFSIIIEGVKPEVAAKVTDAVQVPVIGIGAGKETDGQVLVWSDMLGFFEDFKPKFVKQYLNGAKLVKEAVSQYAKEVKEGSFPSQEFSY</sequence>
<accession>A6Q1X8</accession>
<organism>
    <name type="scientific">Nitratiruptor sp. (strain SB155-2)</name>
    <dbReference type="NCBI Taxonomy" id="387092"/>
    <lineage>
        <taxon>Bacteria</taxon>
        <taxon>Pseudomonadati</taxon>
        <taxon>Campylobacterota</taxon>
        <taxon>Epsilonproteobacteria</taxon>
        <taxon>Nautiliales</taxon>
        <taxon>Nitratiruptoraceae</taxon>
        <taxon>Nitratiruptor</taxon>
    </lineage>
</organism>
<reference key="1">
    <citation type="journal article" date="2007" name="Proc. Natl. Acad. Sci. U.S.A.">
        <title>Deep-sea vent epsilon-proteobacterial genomes provide insights into emergence of pathogens.</title>
        <authorList>
            <person name="Nakagawa S."/>
            <person name="Takaki Y."/>
            <person name="Shimamura S."/>
            <person name="Reysenbach A.-L."/>
            <person name="Takai K."/>
            <person name="Horikoshi K."/>
        </authorList>
    </citation>
    <scope>NUCLEOTIDE SEQUENCE [LARGE SCALE GENOMIC DNA]</scope>
    <source>
        <strain>SB155-2</strain>
    </source>
</reference>
<feature type="chain" id="PRO_1000011374" description="3-methyl-2-oxobutanoate hydroxymethyltransferase">
    <location>
        <begin position="1"/>
        <end position="259"/>
    </location>
</feature>
<feature type="active site" description="Proton acceptor" evidence="1">
    <location>
        <position position="177"/>
    </location>
</feature>
<feature type="binding site" evidence="1">
    <location>
        <begin position="44"/>
        <end position="45"/>
    </location>
    <ligand>
        <name>3-methyl-2-oxobutanoate</name>
        <dbReference type="ChEBI" id="CHEBI:11851"/>
    </ligand>
</feature>
<feature type="binding site" evidence="1">
    <location>
        <position position="44"/>
    </location>
    <ligand>
        <name>Mg(2+)</name>
        <dbReference type="ChEBI" id="CHEBI:18420"/>
    </ligand>
</feature>
<feature type="binding site" evidence="1">
    <location>
        <position position="83"/>
    </location>
    <ligand>
        <name>3-methyl-2-oxobutanoate</name>
        <dbReference type="ChEBI" id="CHEBI:11851"/>
    </ligand>
</feature>
<feature type="binding site" evidence="1">
    <location>
        <position position="83"/>
    </location>
    <ligand>
        <name>Mg(2+)</name>
        <dbReference type="ChEBI" id="CHEBI:18420"/>
    </ligand>
</feature>
<feature type="binding site" evidence="1">
    <location>
        <position position="112"/>
    </location>
    <ligand>
        <name>3-methyl-2-oxobutanoate</name>
        <dbReference type="ChEBI" id="CHEBI:11851"/>
    </ligand>
</feature>
<feature type="binding site" evidence="1">
    <location>
        <position position="114"/>
    </location>
    <ligand>
        <name>Mg(2+)</name>
        <dbReference type="ChEBI" id="CHEBI:18420"/>
    </ligand>
</feature>
<name>PANB_NITSB</name>